<comment type="function">
    <text evidence="1">This protein binds specifically to 23S rRNA; its binding is stimulated by other ribosomal proteins, e.g. L4, L17, and L20. It is important during the early stages of 50S assembly. It makes multiple contacts with different domains of the 23S rRNA in the assembled 50S subunit and ribosome (By similarity).</text>
</comment>
<comment type="function">
    <text evidence="1">The globular domain of the protein is located near the polypeptide exit tunnel on the outside of the subunit, while an extended beta-hairpin is found that lines the wall of the exit tunnel in the center of the 70S ribosome.</text>
</comment>
<comment type="subunit">
    <text evidence="1">Part of the 50S ribosomal subunit.</text>
</comment>
<comment type="similarity">
    <text evidence="1">Belongs to the universal ribosomal protein uL22 family.</text>
</comment>
<reference key="1">
    <citation type="journal article" date="2004" name="Proc. Natl. Acad. Sci. U.S.A.">
        <title>The complete genomic sequence of Nocardia farcinica IFM 10152.</title>
        <authorList>
            <person name="Ishikawa J."/>
            <person name="Yamashita A."/>
            <person name="Mikami Y."/>
            <person name="Hoshino Y."/>
            <person name="Kurita H."/>
            <person name="Hotta K."/>
            <person name="Shiba T."/>
            <person name="Hattori M."/>
        </authorList>
    </citation>
    <scope>NUCLEOTIDE SEQUENCE [LARGE SCALE GENOMIC DNA]</scope>
    <source>
        <strain>IFM 10152</strain>
    </source>
</reference>
<gene>
    <name evidence="1" type="primary">rplV</name>
    <name type="ordered locus">NFA_7380</name>
</gene>
<protein>
    <recommendedName>
        <fullName evidence="1">Large ribosomal subunit protein uL22</fullName>
    </recommendedName>
    <alternativeName>
        <fullName evidence="2">50S ribosomal protein L22</fullName>
    </alternativeName>
</protein>
<name>RL22_NOCFA</name>
<dbReference type="EMBL" id="AP006618">
    <property type="protein sequence ID" value="BAD55583.1"/>
    <property type="molecule type" value="Genomic_DNA"/>
</dbReference>
<dbReference type="RefSeq" id="WP_011207269.1">
    <property type="nucleotide sequence ID" value="NC_006361.1"/>
</dbReference>
<dbReference type="SMR" id="Q5Z1V8"/>
<dbReference type="STRING" id="247156.NFA_7380"/>
<dbReference type="GeneID" id="61131569"/>
<dbReference type="KEGG" id="nfa:NFA_7380"/>
<dbReference type="eggNOG" id="COG0091">
    <property type="taxonomic scope" value="Bacteria"/>
</dbReference>
<dbReference type="HOGENOM" id="CLU_083987_3_2_11"/>
<dbReference type="OrthoDB" id="9805969at2"/>
<dbReference type="Proteomes" id="UP000006820">
    <property type="component" value="Chromosome"/>
</dbReference>
<dbReference type="GO" id="GO:0022625">
    <property type="term" value="C:cytosolic large ribosomal subunit"/>
    <property type="evidence" value="ECO:0007669"/>
    <property type="project" value="TreeGrafter"/>
</dbReference>
<dbReference type="GO" id="GO:0019843">
    <property type="term" value="F:rRNA binding"/>
    <property type="evidence" value="ECO:0007669"/>
    <property type="project" value="UniProtKB-UniRule"/>
</dbReference>
<dbReference type="GO" id="GO:0003735">
    <property type="term" value="F:structural constituent of ribosome"/>
    <property type="evidence" value="ECO:0007669"/>
    <property type="project" value="InterPro"/>
</dbReference>
<dbReference type="GO" id="GO:0006412">
    <property type="term" value="P:translation"/>
    <property type="evidence" value="ECO:0007669"/>
    <property type="project" value="UniProtKB-UniRule"/>
</dbReference>
<dbReference type="CDD" id="cd00336">
    <property type="entry name" value="Ribosomal_L22"/>
    <property type="match status" value="1"/>
</dbReference>
<dbReference type="FunFam" id="3.90.470.10:FF:000002">
    <property type="entry name" value="50S ribosomal protein L22"/>
    <property type="match status" value="1"/>
</dbReference>
<dbReference type="Gene3D" id="3.90.470.10">
    <property type="entry name" value="Ribosomal protein L22/L17"/>
    <property type="match status" value="1"/>
</dbReference>
<dbReference type="HAMAP" id="MF_01331_B">
    <property type="entry name" value="Ribosomal_uL22_B"/>
    <property type="match status" value="1"/>
</dbReference>
<dbReference type="InterPro" id="IPR001063">
    <property type="entry name" value="Ribosomal_uL22"/>
</dbReference>
<dbReference type="InterPro" id="IPR005727">
    <property type="entry name" value="Ribosomal_uL22_bac/chlpt-type"/>
</dbReference>
<dbReference type="InterPro" id="IPR047867">
    <property type="entry name" value="Ribosomal_uL22_bac/org-type"/>
</dbReference>
<dbReference type="InterPro" id="IPR018260">
    <property type="entry name" value="Ribosomal_uL22_CS"/>
</dbReference>
<dbReference type="InterPro" id="IPR036394">
    <property type="entry name" value="Ribosomal_uL22_sf"/>
</dbReference>
<dbReference type="NCBIfam" id="TIGR01044">
    <property type="entry name" value="rplV_bact"/>
    <property type="match status" value="1"/>
</dbReference>
<dbReference type="PANTHER" id="PTHR13501">
    <property type="entry name" value="CHLOROPLAST 50S RIBOSOMAL PROTEIN L22-RELATED"/>
    <property type="match status" value="1"/>
</dbReference>
<dbReference type="PANTHER" id="PTHR13501:SF8">
    <property type="entry name" value="LARGE RIBOSOMAL SUBUNIT PROTEIN UL22M"/>
    <property type="match status" value="1"/>
</dbReference>
<dbReference type="Pfam" id="PF00237">
    <property type="entry name" value="Ribosomal_L22"/>
    <property type="match status" value="1"/>
</dbReference>
<dbReference type="SUPFAM" id="SSF54843">
    <property type="entry name" value="Ribosomal protein L22"/>
    <property type="match status" value="1"/>
</dbReference>
<dbReference type="PROSITE" id="PS00464">
    <property type="entry name" value="RIBOSOMAL_L22"/>
    <property type="match status" value="1"/>
</dbReference>
<organism>
    <name type="scientific">Nocardia farcinica (strain IFM 10152)</name>
    <dbReference type="NCBI Taxonomy" id="247156"/>
    <lineage>
        <taxon>Bacteria</taxon>
        <taxon>Bacillati</taxon>
        <taxon>Actinomycetota</taxon>
        <taxon>Actinomycetes</taxon>
        <taxon>Mycobacteriales</taxon>
        <taxon>Nocardiaceae</taxon>
        <taxon>Nocardia</taxon>
    </lineage>
</organism>
<proteinExistence type="inferred from homology"/>
<sequence length="133" mass="14243">MTTTETQNPTARATAKHVRVTPMKARRVVDLVRGKRVEDALAILKFAPQAASEPVAKVVASAAANAENNLGLDPATLVISTAYVDEGATLKRFQPRAQGRAFRIRKRTSHITIEVESVPTAGGTRGRRKGGAK</sequence>
<keyword id="KW-1185">Reference proteome</keyword>
<keyword id="KW-0687">Ribonucleoprotein</keyword>
<keyword id="KW-0689">Ribosomal protein</keyword>
<keyword id="KW-0694">RNA-binding</keyword>
<keyword id="KW-0699">rRNA-binding</keyword>
<evidence type="ECO:0000255" key="1">
    <source>
        <dbReference type="HAMAP-Rule" id="MF_01331"/>
    </source>
</evidence>
<evidence type="ECO:0000305" key="2"/>
<accession>Q5Z1V8</accession>
<feature type="chain" id="PRO_0000243178" description="Large ribosomal subunit protein uL22">
    <location>
        <begin position="1"/>
        <end position="133"/>
    </location>
</feature>